<reference key="1">
    <citation type="journal article" date="1998" name="DNA Res.">
        <title>Structural analysis of Arabidopsis thaliana chromosome 5. V. Sequence features of the regions of 1,381,565 bp covered by twenty one physically assigned P1 and TAC clones.</title>
        <authorList>
            <person name="Kaneko T."/>
            <person name="Kotani H."/>
            <person name="Nakamura Y."/>
            <person name="Sato S."/>
            <person name="Asamizu E."/>
            <person name="Miyajima N."/>
            <person name="Tabata S."/>
        </authorList>
    </citation>
    <scope>NUCLEOTIDE SEQUENCE [LARGE SCALE GENOMIC DNA]</scope>
    <source>
        <strain>cv. Columbia</strain>
    </source>
</reference>
<reference key="2">
    <citation type="journal article" date="2017" name="Plant J.">
        <title>Araport11: a complete reannotation of the Arabidopsis thaliana reference genome.</title>
        <authorList>
            <person name="Cheng C.Y."/>
            <person name="Krishnakumar V."/>
            <person name="Chan A.P."/>
            <person name="Thibaud-Nissen F."/>
            <person name="Schobel S."/>
            <person name="Town C.D."/>
        </authorList>
    </citation>
    <scope>GENOME REANNOTATION</scope>
    <source>
        <strain>cv. Columbia</strain>
    </source>
</reference>
<reference key="3">
    <citation type="journal article" date="2003" name="Science">
        <title>Empirical analysis of transcriptional activity in the Arabidopsis genome.</title>
        <authorList>
            <person name="Yamada K."/>
            <person name="Lim J."/>
            <person name="Dale J.M."/>
            <person name="Chen H."/>
            <person name="Shinn P."/>
            <person name="Palm C.J."/>
            <person name="Southwick A.M."/>
            <person name="Wu H.C."/>
            <person name="Kim C.J."/>
            <person name="Nguyen M."/>
            <person name="Pham P.K."/>
            <person name="Cheuk R.F."/>
            <person name="Karlin-Newmann G."/>
            <person name="Liu S.X."/>
            <person name="Lam B."/>
            <person name="Sakano H."/>
            <person name="Wu T."/>
            <person name="Yu G."/>
            <person name="Miranda M."/>
            <person name="Quach H.L."/>
            <person name="Tripp M."/>
            <person name="Chang C.H."/>
            <person name="Lee J.M."/>
            <person name="Toriumi M.J."/>
            <person name="Chan M.M."/>
            <person name="Tang C.C."/>
            <person name="Onodera C.S."/>
            <person name="Deng J.M."/>
            <person name="Akiyama K."/>
            <person name="Ansari Y."/>
            <person name="Arakawa T."/>
            <person name="Banh J."/>
            <person name="Banno F."/>
            <person name="Bowser L."/>
            <person name="Brooks S.Y."/>
            <person name="Carninci P."/>
            <person name="Chao Q."/>
            <person name="Choy N."/>
            <person name="Enju A."/>
            <person name="Goldsmith A.D."/>
            <person name="Gurjal M."/>
            <person name="Hansen N.F."/>
            <person name="Hayashizaki Y."/>
            <person name="Johnson-Hopson C."/>
            <person name="Hsuan V.W."/>
            <person name="Iida K."/>
            <person name="Karnes M."/>
            <person name="Khan S."/>
            <person name="Koesema E."/>
            <person name="Ishida J."/>
            <person name="Jiang P.X."/>
            <person name="Jones T."/>
            <person name="Kawai J."/>
            <person name="Kamiya A."/>
            <person name="Meyers C."/>
            <person name="Nakajima M."/>
            <person name="Narusaka M."/>
            <person name="Seki M."/>
            <person name="Sakurai T."/>
            <person name="Satou M."/>
            <person name="Tamse R."/>
            <person name="Vaysberg M."/>
            <person name="Wallender E.K."/>
            <person name="Wong C."/>
            <person name="Yamamura Y."/>
            <person name="Yuan S."/>
            <person name="Shinozaki K."/>
            <person name="Davis R.W."/>
            <person name="Theologis A."/>
            <person name="Ecker J.R."/>
        </authorList>
    </citation>
    <scope>NUCLEOTIDE SEQUENCE [LARGE SCALE MRNA]</scope>
    <source>
        <strain>cv. Columbia</strain>
    </source>
</reference>
<reference key="4">
    <citation type="journal article" date="2004" name="J. Exp. Bot.">
        <title>The multi-protein family of Arabidopsis sulphotransferases and their relatives in other plant species.</title>
        <authorList>
            <person name="Klein M."/>
            <person name="Papenbrock J."/>
        </authorList>
    </citation>
    <scope>GENE FAMILY</scope>
    <scope>NOMENCLATURE</scope>
</reference>
<reference key="5">
    <citation type="journal article" date="2003" name="J. Biol. Chem.">
        <title>Biochemical and molecular characterization of a hydroxyjasmonate sulfotransferase from Arabidopsis thaliana.</title>
        <authorList>
            <person name="Gidda S.K."/>
            <person name="Miersch O."/>
            <person name="Levitin A."/>
            <person name="Schmidt J."/>
            <person name="Wasternack C."/>
            <person name="Varin L."/>
        </authorList>
    </citation>
    <scope>FUNCTION</scope>
    <scope>CATALYTIC ACTIVITY</scope>
    <scope>BIOPHYSICOCHEMICAL PROPERTIES</scope>
    <scope>INDUCTION</scope>
    <scope>TISSUE SPECIFICITY</scope>
</reference>
<organism>
    <name type="scientific">Arabidopsis thaliana</name>
    <name type="common">Mouse-ear cress</name>
    <dbReference type="NCBI Taxonomy" id="3702"/>
    <lineage>
        <taxon>Eukaryota</taxon>
        <taxon>Viridiplantae</taxon>
        <taxon>Streptophyta</taxon>
        <taxon>Embryophyta</taxon>
        <taxon>Tracheophyta</taxon>
        <taxon>Spermatophyta</taxon>
        <taxon>Magnoliopsida</taxon>
        <taxon>eudicotyledons</taxon>
        <taxon>Gunneridae</taxon>
        <taxon>Pentapetalae</taxon>
        <taxon>rosids</taxon>
        <taxon>malvids</taxon>
        <taxon>Brassicales</taxon>
        <taxon>Brassicaceae</taxon>
        <taxon>Camelineae</taxon>
        <taxon>Arabidopsis</taxon>
    </lineage>
</organism>
<name>SOT15_ARATH</name>
<accession>Q8L5A7</accession>
<accession>Q940P4</accession>
<accession>Q9FL45</accession>
<proteinExistence type="evidence at protein level"/>
<sequence>MATSSMKSIPMAIPSFSMCHKLELLKEGKTRDVPKAEEDEGLSCEFQEMLDSLPKERGWRTRYLYLFQGFWCQAKEIQAIMSFQKHFQSLENDVVLATIPKSGTTWLKALTFTILNRHRFDPVASSTNHPLFTSNPHDLVPFFEYKLYANGDVPDLSGLASPRTFATHLPFGSLKETIEKPGVKVVYLCRNPFDTFISSWHYTNNIKSESVSPVLLDQAFDLYCRGVIGFGPFWEHMLGYWRESLKRPEKVFFLRYEDLKDDIETNLKRLATFLELPFTEEEERKGVVKAIAELCSFENLKKLEVNKSNKSIKNFENRFLFRKGEVSDWVNYLSPSQVERLSALVDDKLGGSGLTFRLS</sequence>
<feature type="chain" id="PRO_0000417062" description="Cytosolic sulfotransferase 15">
    <location>
        <begin position="1"/>
        <end position="359"/>
    </location>
</feature>
<feature type="active site" description="Proton acceptor" evidence="1">
    <location>
        <position position="168"/>
    </location>
</feature>
<feature type="binding site" evidence="1">
    <location>
        <begin position="101"/>
        <end position="106"/>
    </location>
    <ligand>
        <name>3'-phosphoadenylyl sulfate</name>
        <dbReference type="ChEBI" id="CHEBI:58339"/>
    </ligand>
</feature>
<feature type="binding site" evidence="1">
    <location>
        <position position="190"/>
    </location>
    <ligand>
        <name>3'-phosphoadenylyl sulfate</name>
        <dbReference type="ChEBI" id="CHEBI:58339"/>
    </ligand>
</feature>
<feature type="binding site" evidence="1">
    <location>
        <position position="198"/>
    </location>
    <ligand>
        <name>3'-phosphoadenylyl sulfate</name>
        <dbReference type="ChEBI" id="CHEBI:58339"/>
    </ligand>
</feature>
<feature type="binding site" evidence="1">
    <location>
        <position position="256"/>
    </location>
    <ligand>
        <name>3'-phosphoadenylyl sulfate</name>
        <dbReference type="ChEBI" id="CHEBI:58339"/>
    </ligand>
</feature>
<feature type="binding site" evidence="1">
    <location>
        <begin position="322"/>
        <end position="324"/>
    </location>
    <ligand>
        <name>3'-phosphoadenylyl sulfate</name>
        <dbReference type="ChEBI" id="CHEBI:58339"/>
    </ligand>
</feature>
<feature type="sequence conflict" description="In Ref. 3; AAL06879." evidence="3" ref="3">
    <original>G</original>
    <variation>A</variation>
    <location>
        <position position="231"/>
    </location>
</feature>
<keyword id="KW-0963">Cytoplasm</keyword>
<keyword id="KW-1185">Reference proteome</keyword>
<keyword id="KW-0808">Transferase</keyword>
<evidence type="ECO:0000250" key="1"/>
<evidence type="ECO:0000269" key="2">
    <source>
    </source>
</evidence>
<evidence type="ECO:0000305" key="3"/>
<gene>
    <name type="primary">SOT15</name>
    <name type="synonym">ST2A</name>
    <name type="ordered locus">At5g07010</name>
    <name type="ORF">MOJ9.18</name>
</gene>
<comment type="function">
    <text evidence="2">Sulfotransferase that utilizes 3'-phospho-5'-adenylyl sulfate (PAPS) as sulfonate donor to specifically catalyze the sulfate conjugation of hydroxyjasmonates, with a preference for 12-hydroxyjasmonate over 11-hydroxyjasmonate. No activity with 12-hydroxyjasmonic acid methyl ester, cucurbic acid, 7-iso-cucurbic acid, 6-epi-cucurbic acid, 6-epi-7-iso-cucurbic acid and their methyl esters, prostaglandin E2, arachidonyl alcohol and 11-eicosenol.</text>
</comment>
<comment type="catalytic activity">
    <reaction evidence="2">
        <text>a 12-hydroxyjasmonate + 3'-phosphoadenylyl sulfate = a 12-sulfojasmonate + adenosine 3',5'-bisphosphate + H(+)</text>
        <dbReference type="Rhea" id="RHEA:52728"/>
        <dbReference type="ChEBI" id="CHEBI:15378"/>
        <dbReference type="ChEBI" id="CHEBI:58339"/>
        <dbReference type="ChEBI" id="CHEBI:58343"/>
        <dbReference type="ChEBI" id="CHEBI:136810"/>
        <dbReference type="ChEBI" id="CHEBI:136811"/>
        <dbReference type="EC" id="2.8.2.39"/>
    </reaction>
</comment>
<comment type="biophysicochemical properties">
    <kinetics>
        <KM evidence="2">50 uM for 11-hydroxyjasmonate</KM>
        <KM evidence="2">10 uM for 12-hydroxyjasmonate</KM>
        <KM evidence="2">1 uM for 3'-phospho-5'-adenylyl sulfate</KM>
        <Vmax evidence="2">37.5 pmol/sec/mg enzyme with 12-hydroxyjasmonate as substrate</Vmax>
    </kinetics>
    <phDependence>
        <text evidence="2">Optimum pH is 7.5. Active in a broad range pH.</text>
    </phDependence>
</comment>
<comment type="subcellular location">
    <subcellularLocation>
        <location evidence="1">Cytoplasm</location>
    </subcellularLocation>
</comment>
<comment type="tissue specificity">
    <text evidence="2">Expressed in leaves.</text>
</comment>
<comment type="induction">
    <text evidence="2">Up-regulated by methyljasmonate, 12 hydroxyjasmonate and 12-oxo-phytodienoic acid, but not by hormones.</text>
</comment>
<comment type="similarity">
    <text evidence="3">Belongs to the sulfotransferase 1 family.</text>
</comment>
<comment type="sequence caution" evidence="3">
    <conflict type="erroneous initiation">
        <sequence resource="EMBL-CDS" id="BAB11159"/>
    </conflict>
    <text>Truncated N-terminus.</text>
</comment>
<dbReference type="EC" id="2.8.2.39" evidence="2"/>
<dbReference type="EMBL" id="AB010697">
    <property type="protein sequence ID" value="BAB11159.1"/>
    <property type="status" value="ALT_INIT"/>
    <property type="molecule type" value="Genomic_DNA"/>
</dbReference>
<dbReference type="EMBL" id="CP002688">
    <property type="protein sequence ID" value="AED91098.1"/>
    <property type="molecule type" value="Genomic_DNA"/>
</dbReference>
<dbReference type="EMBL" id="AY099809">
    <property type="protein sequence ID" value="AAM20660.1"/>
    <property type="molecule type" value="mRNA"/>
</dbReference>
<dbReference type="EMBL" id="AY054219">
    <property type="protein sequence ID" value="AAL06879.1"/>
    <property type="molecule type" value="mRNA"/>
</dbReference>
<dbReference type="EMBL" id="AY084999">
    <property type="protein sequence ID" value="AAM61557.1"/>
    <property type="molecule type" value="mRNA"/>
</dbReference>
<dbReference type="EMBL" id="BT008847">
    <property type="protein sequence ID" value="AAP68286.1"/>
    <property type="molecule type" value="mRNA"/>
</dbReference>
<dbReference type="RefSeq" id="NP_568177.1">
    <property type="nucleotide sequence ID" value="NM_120783.4"/>
</dbReference>
<dbReference type="SMR" id="Q8L5A7"/>
<dbReference type="BioGRID" id="15871">
    <property type="interactions" value="1"/>
</dbReference>
<dbReference type="FunCoup" id="Q8L5A7">
    <property type="interactions" value="47"/>
</dbReference>
<dbReference type="IntAct" id="Q8L5A7">
    <property type="interactions" value="2"/>
</dbReference>
<dbReference type="STRING" id="3702.Q8L5A7"/>
<dbReference type="iPTMnet" id="Q8L5A7"/>
<dbReference type="PaxDb" id="3702-AT5G07010.1"/>
<dbReference type="ProteomicsDB" id="232610"/>
<dbReference type="EnsemblPlants" id="AT5G07010.1">
    <property type="protein sequence ID" value="AT5G07010.1"/>
    <property type="gene ID" value="AT5G07010"/>
</dbReference>
<dbReference type="GeneID" id="830592"/>
<dbReference type="Gramene" id="AT5G07010.1">
    <property type="protein sequence ID" value="AT5G07010.1"/>
    <property type="gene ID" value="AT5G07010"/>
</dbReference>
<dbReference type="KEGG" id="ath:AT5G07010"/>
<dbReference type="Araport" id="AT5G07010"/>
<dbReference type="TAIR" id="AT5G07010">
    <property type="gene designation" value="ST2A"/>
</dbReference>
<dbReference type="eggNOG" id="KOG1584">
    <property type="taxonomic scope" value="Eukaryota"/>
</dbReference>
<dbReference type="HOGENOM" id="CLU_027239_0_1_1"/>
<dbReference type="InParanoid" id="Q8L5A7"/>
<dbReference type="OMA" id="EFPILEC"/>
<dbReference type="PhylomeDB" id="Q8L5A7"/>
<dbReference type="BioCyc" id="ARA:AT5G07010-MONOMER"/>
<dbReference type="BRENDA" id="2.8.2.39">
    <property type="organism ID" value="399"/>
</dbReference>
<dbReference type="PRO" id="PR:Q8L5A7"/>
<dbReference type="Proteomes" id="UP000006548">
    <property type="component" value="Chromosome 5"/>
</dbReference>
<dbReference type="ExpressionAtlas" id="Q8L5A7">
    <property type="expression patterns" value="baseline and differential"/>
</dbReference>
<dbReference type="GO" id="GO:0005737">
    <property type="term" value="C:cytoplasm"/>
    <property type="evidence" value="ECO:0007669"/>
    <property type="project" value="UniProtKB-SubCell"/>
</dbReference>
<dbReference type="GO" id="GO:0080131">
    <property type="term" value="F:hydroxyjasmonate sulfotransferase activity"/>
    <property type="evidence" value="ECO:0000314"/>
    <property type="project" value="TAIR"/>
</dbReference>
<dbReference type="GO" id="GO:0009694">
    <property type="term" value="P:jasmonic acid metabolic process"/>
    <property type="evidence" value="ECO:0000314"/>
    <property type="project" value="TAIR"/>
</dbReference>
<dbReference type="GO" id="GO:0009753">
    <property type="term" value="P:response to jasmonic acid"/>
    <property type="evidence" value="ECO:0000270"/>
    <property type="project" value="TAIR"/>
</dbReference>
<dbReference type="FunFam" id="3.40.50.300:FF:001258">
    <property type="entry name" value="Sulfotransferase"/>
    <property type="match status" value="1"/>
</dbReference>
<dbReference type="Gene3D" id="3.40.50.300">
    <property type="entry name" value="P-loop containing nucleotide triphosphate hydrolases"/>
    <property type="match status" value="1"/>
</dbReference>
<dbReference type="InterPro" id="IPR027417">
    <property type="entry name" value="P-loop_NTPase"/>
</dbReference>
<dbReference type="InterPro" id="IPR000863">
    <property type="entry name" value="Sulfotransferase_dom"/>
</dbReference>
<dbReference type="PANTHER" id="PTHR11783">
    <property type="entry name" value="SULFOTRANSFERASE SULT"/>
    <property type="match status" value="1"/>
</dbReference>
<dbReference type="Pfam" id="PF00685">
    <property type="entry name" value="Sulfotransfer_1"/>
    <property type="match status" value="1"/>
</dbReference>
<dbReference type="SUPFAM" id="SSF52540">
    <property type="entry name" value="P-loop containing nucleoside triphosphate hydrolases"/>
    <property type="match status" value="1"/>
</dbReference>
<protein>
    <recommendedName>
        <fullName>Cytosolic sulfotransferase 15</fullName>
        <shortName>AtSOT15</shortName>
        <ecNumber evidence="2">2.8.2.39</ecNumber>
    </recommendedName>
    <alternativeName>
        <fullName>Sulfotransferase 2a</fullName>
        <shortName>AtST2a</shortName>
    </alternativeName>
</protein>